<dbReference type="EMBL" id="CP001173">
    <property type="protein sequence ID" value="ACI26835.1"/>
    <property type="molecule type" value="Genomic_DNA"/>
</dbReference>
<dbReference type="RefSeq" id="WP_000238762.1">
    <property type="nucleotide sequence ID" value="NC_011333.1"/>
</dbReference>
<dbReference type="SMR" id="B5Z671"/>
<dbReference type="KEGG" id="hpg:HPG27_63"/>
<dbReference type="HOGENOM" id="CLU_072144_1_0_7"/>
<dbReference type="Proteomes" id="UP000001735">
    <property type="component" value="Chromosome"/>
</dbReference>
<dbReference type="GO" id="GO:0005737">
    <property type="term" value="C:cytoplasm"/>
    <property type="evidence" value="ECO:0007669"/>
    <property type="project" value="UniProtKB-SubCell"/>
</dbReference>
<dbReference type="GO" id="GO:0005525">
    <property type="term" value="F:GTP binding"/>
    <property type="evidence" value="ECO:0007669"/>
    <property type="project" value="UniProtKB-KW"/>
</dbReference>
<dbReference type="GO" id="GO:0003924">
    <property type="term" value="F:GTPase activity"/>
    <property type="evidence" value="ECO:0007669"/>
    <property type="project" value="InterPro"/>
</dbReference>
<dbReference type="GO" id="GO:0016151">
    <property type="term" value="F:nickel cation binding"/>
    <property type="evidence" value="ECO:0007669"/>
    <property type="project" value="InterPro"/>
</dbReference>
<dbReference type="GO" id="GO:0043419">
    <property type="term" value="P:urea catabolic process"/>
    <property type="evidence" value="ECO:0007669"/>
    <property type="project" value="InterPro"/>
</dbReference>
<dbReference type="CDD" id="cd05540">
    <property type="entry name" value="UreG"/>
    <property type="match status" value="1"/>
</dbReference>
<dbReference type="FunFam" id="3.40.50.300:FF:000208">
    <property type="entry name" value="Urease accessory protein UreG"/>
    <property type="match status" value="1"/>
</dbReference>
<dbReference type="Gene3D" id="3.40.50.300">
    <property type="entry name" value="P-loop containing nucleotide triphosphate hydrolases"/>
    <property type="match status" value="1"/>
</dbReference>
<dbReference type="HAMAP" id="MF_01389">
    <property type="entry name" value="UreG"/>
    <property type="match status" value="1"/>
</dbReference>
<dbReference type="InterPro" id="IPR003495">
    <property type="entry name" value="CobW/HypB/UreG_nucleotide-bd"/>
</dbReference>
<dbReference type="InterPro" id="IPR027417">
    <property type="entry name" value="P-loop_NTPase"/>
</dbReference>
<dbReference type="InterPro" id="IPR004400">
    <property type="entry name" value="UreG"/>
</dbReference>
<dbReference type="NCBIfam" id="TIGR00101">
    <property type="entry name" value="ureG"/>
    <property type="match status" value="1"/>
</dbReference>
<dbReference type="PANTHER" id="PTHR31715">
    <property type="entry name" value="UREASE ACCESSORY PROTEIN G"/>
    <property type="match status" value="1"/>
</dbReference>
<dbReference type="PANTHER" id="PTHR31715:SF0">
    <property type="entry name" value="UREASE ACCESSORY PROTEIN G"/>
    <property type="match status" value="1"/>
</dbReference>
<dbReference type="Pfam" id="PF02492">
    <property type="entry name" value="cobW"/>
    <property type="match status" value="1"/>
</dbReference>
<dbReference type="PIRSF" id="PIRSF005624">
    <property type="entry name" value="Ni-bind_GTPase"/>
    <property type="match status" value="1"/>
</dbReference>
<dbReference type="SUPFAM" id="SSF52540">
    <property type="entry name" value="P-loop containing nucleoside triphosphate hydrolases"/>
    <property type="match status" value="1"/>
</dbReference>
<accession>B5Z671</accession>
<keyword id="KW-0143">Chaperone</keyword>
<keyword id="KW-0963">Cytoplasm</keyword>
<keyword id="KW-0342">GTP-binding</keyword>
<keyword id="KW-0996">Nickel insertion</keyword>
<keyword id="KW-0547">Nucleotide-binding</keyword>
<keyword id="KW-1185">Reference proteome</keyword>
<comment type="function">
    <text evidence="1">Facilitates the functional incorporation of the urease nickel metallocenter. This process requires GTP hydrolysis, probably effectuated by UreG.</text>
</comment>
<comment type="subunit">
    <text evidence="1">Homodimer. UreH, UreF and UreG form a complex that acts as a GTP-hydrolysis-dependent molecular chaperone, activating the urease apoprotein by helping to assemble the nickel containing metallocenter of UreC. The UreE protein probably delivers the nickel.</text>
</comment>
<comment type="subcellular location">
    <subcellularLocation>
        <location evidence="1">Cytoplasm</location>
    </subcellularLocation>
</comment>
<comment type="similarity">
    <text evidence="1">Belongs to the SIMIBI class G3E GTPase family. UreG subfamily.</text>
</comment>
<gene>
    <name evidence="1" type="primary">ureG</name>
    <name type="ordered locus">HPG27_63</name>
</gene>
<proteinExistence type="inferred from homology"/>
<organism>
    <name type="scientific">Helicobacter pylori (strain G27)</name>
    <dbReference type="NCBI Taxonomy" id="563041"/>
    <lineage>
        <taxon>Bacteria</taxon>
        <taxon>Pseudomonadati</taxon>
        <taxon>Campylobacterota</taxon>
        <taxon>Epsilonproteobacteria</taxon>
        <taxon>Campylobacterales</taxon>
        <taxon>Helicobacteraceae</taxon>
        <taxon>Helicobacter</taxon>
    </lineage>
</organism>
<reference key="1">
    <citation type="journal article" date="2009" name="J. Bacteriol.">
        <title>The complete genome sequence of Helicobacter pylori strain G27.</title>
        <authorList>
            <person name="Baltrus D.A."/>
            <person name="Amieva M.R."/>
            <person name="Covacci A."/>
            <person name="Lowe T.M."/>
            <person name="Merrell D.S."/>
            <person name="Ottemann K.M."/>
            <person name="Stein M."/>
            <person name="Salama N.R."/>
            <person name="Guillemin K."/>
        </authorList>
    </citation>
    <scope>NUCLEOTIDE SEQUENCE [LARGE SCALE GENOMIC DNA]</scope>
    <source>
        <strain>G27</strain>
    </source>
</reference>
<feature type="chain" id="PRO_1000145179" description="Urease accessory protein UreG">
    <location>
        <begin position="1"/>
        <end position="199"/>
    </location>
</feature>
<feature type="binding site" evidence="1">
    <location>
        <begin position="8"/>
        <end position="15"/>
    </location>
    <ligand>
        <name>GTP</name>
        <dbReference type="ChEBI" id="CHEBI:37565"/>
    </ligand>
</feature>
<protein>
    <recommendedName>
        <fullName evidence="1">Urease accessory protein UreG</fullName>
    </recommendedName>
</protein>
<evidence type="ECO:0000255" key="1">
    <source>
        <dbReference type="HAMAP-Rule" id="MF_01389"/>
    </source>
</evidence>
<sequence>MVKIGVCGPVGSGKTALIEALTRHMSKDYDMAVITNDIYTKEDAEFMCKNSVMPRERIIGVETGGCPHTAIREDASMNLEAVEEMHGRFPNLELLLIESGGDNLSATFNPELADFTIFVIDVAEGDKIPRKGGPGITRSDLLVINKIDLAPYVGADLKVMERDSKKMRGEKPFIFTNIRAKEGLDDVIAWIKRNALLED</sequence>
<name>UREG_HELPG</name>